<reference key="1">
    <citation type="journal article" date="2007" name="PLoS Genet.">
        <title>Genome analysis of Minibacterium massiliensis highlights the convergent evolution of water-living bacteria.</title>
        <authorList>
            <person name="Audic S."/>
            <person name="Robert C."/>
            <person name="Campagna B."/>
            <person name="Parinello H."/>
            <person name="Claverie J.-M."/>
            <person name="Raoult D."/>
            <person name="Drancourt M."/>
        </authorList>
    </citation>
    <scope>NUCLEOTIDE SEQUENCE [LARGE SCALE GENOMIC DNA]</scope>
    <source>
        <strain>Marseille</strain>
    </source>
</reference>
<feature type="chain" id="PRO_1000068552" description="Probable chemoreceptor glutamine deamidase CheD">
    <location>
        <begin position="1"/>
        <end position="203"/>
    </location>
</feature>
<proteinExistence type="inferred from homology"/>
<accession>A6SZT5</accession>
<organism>
    <name type="scientific">Janthinobacterium sp. (strain Marseille)</name>
    <name type="common">Minibacterium massiliensis</name>
    <dbReference type="NCBI Taxonomy" id="375286"/>
    <lineage>
        <taxon>Bacteria</taxon>
        <taxon>Pseudomonadati</taxon>
        <taxon>Pseudomonadota</taxon>
        <taxon>Betaproteobacteria</taxon>
        <taxon>Burkholderiales</taxon>
        <taxon>Oxalobacteraceae</taxon>
        <taxon>Janthinobacterium</taxon>
    </lineage>
</organism>
<protein>
    <recommendedName>
        <fullName evidence="1">Probable chemoreceptor glutamine deamidase CheD</fullName>
        <ecNumber evidence="1">3.5.1.44</ecNumber>
    </recommendedName>
</protein>
<gene>
    <name evidence="1" type="primary">cheD</name>
    <name type="ordered locus">mma_2092</name>
</gene>
<evidence type="ECO:0000255" key="1">
    <source>
        <dbReference type="HAMAP-Rule" id="MF_01440"/>
    </source>
</evidence>
<dbReference type="EC" id="3.5.1.44" evidence="1"/>
<dbReference type="EMBL" id="CP000269">
    <property type="protein sequence ID" value="ABR88351.1"/>
    <property type="molecule type" value="Genomic_DNA"/>
</dbReference>
<dbReference type="RefSeq" id="WP_012079945.1">
    <property type="nucleotide sequence ID" value="NC_009659.1"/>
</dbReference>
<dbReference type="SMR" id="A6SZT5"/>
<dbReference type="STRING" id="375286.mma_2092"/>
<dbReference type="KEGG" id="mms:mma_2092"/>
<dbReference type="eggNOG" id="COG1871">
    <property type="taxonomic scope" value="Bacteria"/>
</dbReference>
<dbReference type="HOGENOM" id="CLU_087854_0_0_4"/>
<dbReference type="OrthoDB" id="9807202at2"/>
<dbReference type="Proteomes" id="UP000006388">
    <property type="component" value="Chromosome"/>
</dbReference>
<dbReference type="GO" id="GO:0050568">
    <property type="term" value="F:protein-glutamine glutaminase activity"/>
    <property type="evidence" value="ECO:0007669"/>
    <property type="project" value="UniProtKB-UniRule"/>
</dbReference>
<dbReference type="GO" id="GO:0006935">
    <property type="term" value="P:chemotaxis"/>
    <property type="evidence" value="ECO:0007669"/>
    <property type="project" value="UniProtKB-UniRule"/>
</dbReference>
<dbReference type="CDD" id="cd16352">
    <property type="entry name" value="CheD"/>
    <property type="match status" value="1"/>
</dbReference>
<dbReference type="Gene3D" id="3.30.1330.200">
    <property type="match status" value="1"/>
</dbReference>
<dbReference type="HAMAP" id="MF_01440">
    <property type="entry name" value="CheD"/>
    <property type="match status" value="1"/>
</dbReference>
<dbReference type="InterPro" id="IPR038592">
    <property type="entry name" value="CheD-like_sf"/>
</dbReference>
<dbReference type="InterPro" id="IPR005659">
    <property type="entry name" value="Chemorcpt_Glu_NH3ase_CheD"/>
</dbReference>
<dbReference type="InterPro" id="IPR011324">
    <property type="entry name" value="Cytotoxic_necrot_fac-like_cat"/>
</dbReference>
<dbReference type="NCBIfam" id="NF010013">
    <property type="entry name" value="PRK13487.1"/>
    <property type="match status" value="1"/>
</dbReference>
<dbReference type="NCBIfam" id="NF010014">
    <property type="entry name" value="PRK13489.1"/>
    <property type="match status" value="1"/>
</dbReference>
<dbReference type="PANTHER" id="PTHR35147">
    <property type="entry name" value="CHEMORECEPTOR GLUTAMINE DEAMIDASE CHED-RELATED"/>
    <property type="match status" value="1"/>
</dbReference>
<dbReference type="PANTHER" id="PTHR35147:SF2">
    <property type="entry name" value="CHEMORECEPTOR GLUTAMINE DEAMIDASE CHED-RELATED"/>
    <property type="match status" value="1"/>
</dbReference>
<dbReference type="Pfam" id="PF03975">
    <property type="entry name" value="CheD"/>
    <property type="match status" value="1"/>
</dbReference>
<dbReference type="SUPFAM" id="SSF64438">
    <property type="entry name" value="CNF1/YfiH-like putative cysteine hydrolases"/>
    <property type="match status" value="1"/>
</dbReference>
<comment type="function">
    <text evidence="1">Probably deamidates glutamine residues to glutamate on methyl-accepting chemotaxis receptors (MCPs), playing an important role in chemotaxis.</text>
</comment>
<comment type="catalytic activity">
    <reaction evidence="1">
        <text>L-glutaminyl-[protein] + H2O = L-glutamyl-[protein] + NH4(+)</text>
        <dbReference type="Rhea" id="RHEA:16441"/>
        <dbReference type="Rhea" id="RHEA-COMP:10207"/>
        <dbReference type="Rhea" id="RHEA-COMP:10208"/>
        <dbReference type="ChEBI" id="CHEBI:15377"/>
        <dbReference type="ChEBI" id="CHEBI:28938"/>
        <dbReference type="ChEBI" id="CHEBI:29973"/>
        <dbReference type="ChEBI" id="CHEBI:30011"/>
        <dbReference type="EC" id="3.5.1.44"/>
    </reaction>
</comment>
<comment type="similarity">
    <text evidence="1">Belongs to the CheD family.</text>
</comment>
<sequence length="203" mass="22572">MSELTKEHFATNVYYDRTFDRDAAKILPGEYYYTGKDMLIVTVLGSCVSACIRDRVTGVGGMNHFMLPDGGGDADSPISASARYGTYAMEILINDLLKAGARRENLEAKVFGGGNVLSGFSSINVGERNAQFVRNFLKVENIRIVAEDLNDVHPRKVYYFPRNGKVLVKKLRQLNNNTLVNREQDYANRLQSGSVSGDVELFS</sequence>
<keyword id="KW-0145">Chemotaxis</keyword>
<keyword id="KW-0378">Hydrolase</keyword>
<name>CHED_JANMA</name>